<sequence length="542" mass="60018">MTRFIFITGGVVSSLGKGLASAALGALLQARGYKVRLRKLDPYLNVDPGTMSPTQHGEVFVTDDGAETDLDLGHYERFTGVSARRSDNVTTGRIYSDVIARERRGDYLGKTVQVIPHVTDAIKEFATADLTDEDFVLCEIGGTVGDIESLPFLEAIRQLRNEMGAERSLIIHLTLLPYIPSAGELKTKPTQHSVKELLGLGIQPDLLMCRSDRPIPEAERNKISLFCNVRREAVIPALDVDTIYQVPVSYHAQGLDVQVCRHFHLPMNEDLDLTRWQTIVDRVRHPEGEVTIAVVGKYTSLIDSYKSLAEALVHGGIANAVKVKLVWLDSEIFEREDAVHYLEGVNGILVPGGFGERGSEGKIEAARFARERSVPYFGICFGMQMAVIEFARHVAGLPGASSSEFGVPEVPLVGLMTEWVRGNERVARGSGDDLGGTMRLGAYECHLRALSKVREIYGAEVIHERHRHRYEVNVTFKDQLEEKGLAFSGMSPDGVLPEIVELPDHPWFIGVQFHPELKSKPFDPHPLFTSFVQAAITQSRLV</sequence>
<proteinExistence type="inferred from homology"/>
<comment type="function">
    <text evidence="1">Catalyzes the ATP-dependent amination of UTP to CTP with either L-glutamine or ammonia as the source of nitrogen. Regulates intracellular CTP levels through interactions with the four ribonucleotide triphosphates.</text>
</comment>
<comment type="catalytic activity">
    <reaction evidence="1">
        <text>UTP + L-glutamine + ATP + H2O = CTP + L-glutamate + ADP + phosphate + 2 H(+)</text>
        <dbReference type="Rhea" id="RHEA:26426"/>
        <dbReference type="ChEBI" id="CHEBI:15377"/>
        <dbReference type="ChEBI" id="CHEBI:15378"/>
        <dbReference type="ChEBI" id="CHEBI:29985"/>
        <dbReference type="ChEBI" id="CHEBI:30616"/>
        <dbReference type="ChEBI" id="CHEBI:37563"/>
        <dbReference type="ChEBI" id="CHEBI:43474"/>
        <dbReference type="ChEBI" id="CHEBI:46398"/>
        <dbReference type="ChEBI" id="CHEBI:58359"/>
        <dbReference type="ChEBI" id="CHEBI:456216"/>
        <dbReference type="EC" id="6.3.4.2"/>
    </reaction>
</comment>
<comment type="catalytic activity">
    <reaction evidence="1">
        <text>L-glutamine + H2O = L-glutamate + NH4(+)</text>
        <dbReference type="Rhea" id="RHEA:15889"/>
        <dbReference type="ChEBI" id="CHEBI:15377"/>
        <dbReference type="ChEBI" id="CHEBI:28938"/>
        <dbReference type="ChEBI" id="CHEBI:29985"/>
        <dbReference type="ChEBI" id="CHEBI:58359"/>
    </reaction>
</comment>
<comment type="catalytic activity">
    <reaction evidence="1">
        <text>UTP + NH4(+) + ATP = CTP + ADP + phosphate + 2 H(+)</text>
        <dbReference type="Rhea" id="RHEA:16597"/>
        <dbReference type="ChEBI" id="CHEBI:15378"/>
        <dbReference type="ChEBI" id="CHEBI:28938"/>
        <dbReference type="ChEBI" id="CHEBI:30616"/>
        <dbReference type="ChEBI" id="CHEBI:37563"/>
        <dbReference type="ChEBI" id="CHEBI:43474"/>
        <dbReference type="ChEBI" id="CHEBI:46398"/>
        <dbReference type="ChEBI" id="CHEBI:456216"/>
    </reaction>
</comment>
<comment type="activity regulation">
    <text evidence="1">Allosterically activated by GTP, when glutamine is the substrate; GTP has no effect on the reaction when ammonia is the substrate. The allosteric effector GTP functions by stabilizing the protein conformation that binds the tetrahedral intermediate(s) formed during glutamine hydrolysis. Inhibited by the product CTP, via allosteric rather than competitive inhibition.</text>
</comment>
<comment type="pathway">
    <text evidence="1">Pyrimidine metabolism; CTP biosynthesis via de novo pathway; CTP from UDP: step 2/2.</text>
</comment>
<comment type="subunit">
    <text evidence="1">Homotetramer.</text>
</comment>
<comment type="miscellaneous">
    <text evidence="1">CTPSs have evolved a hybrid strategy for distinguishing between UTP and CTP. The overlapping regions of the product feedback inhibitory and substrate sites recognize a common feature in both compounds, the triphosphate moiety. To differentiate isosteric substrate and product pyrimidine rings, an additional pocket far from the expected kinase/ligase catalytic site, specifically recognizes the cytosine and ribose portions of the product inhibitor.</text>
</comment>
<comment type="similarity">
    <text evidence="1">Belongs to the CTP synthase family.</text>
</comment>
<reference key="1">
    <citation type="journal article" date="2011" name="Stand. Genomic Sci.">
        <title>Complete genome sequence of Rhodospirillum rubrum type strain (S1).</title>
        <authorList>
            <person name="Munk A.C."/>
            <person name="Copeland A."/>
            <person name="Lucas S."/>
            <person name="Lapidus A."/>
            <person name="Del Rio T.G."/>
            <person name="Barry K."/>
            <person name="Detter J.C."/>
            <person name="Hammon N."/>
            <person name="Israni S."/>
            <person name="Pitluck S."/>
            <person name="Brettin T."/>
            <person name="Bruce D."/>
            <person name="Han C."/>
            <person name="Tapia R."/>
            <person name="Gilna P."/>
            <person name="Schmutz J."/>
            <person name="Larimer F."/>
            <person name="Land M."/>
            <person name="Kyrpides N.C."/>
            <person name="Mavromatis K."/>
            <person name="Richardson P."/>
            <person name="Rohde M."/>
            <person name="Goeker M."/>
            <person name="Klenk H.P."/>
            <person name="Zhang Y."/>
            <person name="Roberts G.P."/>
            <person name="Reslewic S."/>
            <person name="Schwartz D.C."/>
        </authorList>
    </citation>
    <scope>NUCLEOTIDE SEQUENCE [LARGE SCALE GENOMIC DNA]</scope>
    <source>
        <strain>ATCC 11170 / ATH 1.1.1 / DSM 467 / LMG 4362 / NCIMB 8255 / S1</strain>
    </source>
</reference>
<accession>Q2RT58</accession>
<keyword id="KW-0067">ATP-binding</keyword>
<keyword id="KW-0315">Glutamine amidotransferase</keyword>
<keyword id="KW-0436">Ligase</keyword>
<keyword id="KW-0460">Magnesium</keyword>
<keyword id="KW-0479">Metal-binding</keyword>
<keyword id="KW-0547">Nucleotide-binding</keyword>
<keyword id="KW-0665">Pyrimidine biosynthesis</keyword>
<keyword id="KW-1185">Reference proteome</keyword>
<evidence type="ECO:0000255" key="1">
    <source>
        <dbReference type="HAMAP-Rule" id="MF_01227"/>
    </source>
</evidence>
<dbReference type="EC" id="6.3.4.2" evidence="1"/>
<dbReference type="EMBL" id="CP000230">
    <property type="protein sequence ID" value="ABC22687.1"/>
    <property type="molecule type" value="Genomic_DNA"/>
</dbReference>
<dbReference type="RefSeq" id="WP_011389640.1">
    <property type="nucleotide sequence ID" value="NC_007643.1"/>
</dbReference>
<dbReference type="RefSeq" id="YP_426974.1">
    <property type="nucleotide sequence ID" value="NC_007643.1"/>
</dbReference>
<dbReference type="SMR" id="Q2RT58"/>
<dbReference type="STRING" id="269796.Rru_A1887"/>
<dbReference type="MEROPS" id="C26.964"/>
<dbReference type="EnsemblBacteria" id="ABC22687">
    <property type="protein sequence ID" value="ABC22687"/>
    <property type="gene ID" value="Rru_A1887"/>
</dbReference>
<dbReference type="KEGG" id="rru:Rru_A1887"/>
<dbReference type="PATRIC" id="fig|269796.9.peg.1967"/>
<dbReference type="eggNOG" id="COG0504">
    <property type="taxonomic scope" value="Bacteria"/>
</dbReference>
<dbReference type="HOGENOM" id="CLU_011675_5_0_5"/>
<dbReference type="PhylomeDB" id="Q2RT58"/>
<dbReference type="UniPathway" id="UPA00159">
    <property type="reaction ID" value="UER00277"/>
</dbReference>
<dbReference type="Proteomes" id="UP000001929">
    <property type="component" value="Chromosome"/>
</dbReference>
<dbReference type="GO" id="GO:0005829">
    <property type="term" value="C:cytosol"/>
    <property type="evidence" value="ECO:0007669"/>
    <property type="project" value="TreeGrafter"/>
</dbReference>
<dbReference type="GO" id="GO:0005524">
    <property type="term" value="F:ATP binding"/>
    <property type="evidence" value="ECO:0007669"/>
    <property type="project" value="UniProtKB-KW"/>
</dbReference>
<dbReference type="GO" id="GO:0003883">
    <property type="term" value="F:CTP synthase activity"/>
    <property type="evidence" value="ECO:0007669"/>
    <property type="project" value="UniProtKB-UniRule"/>
</dbReference>
<dbReference type="GO" id="GO:0004359">
    <property type="term" value="F:glutaminase activity"/>
    <property type="evidence" value="ECO:0007669"/>
    <property type="project" value="RHEA"/>
</dbReference>
<dbReference type="GO" id="GO:0042802">
    <property type="term" value="F:identical protein binding"/>
    <property type="evidence" value="ECO:0007669"/>
    <property type="project" value="TreeGrafter"/>
</dbReference>
<dbReference type="GO" id="GO:0046872">
    <property type="term" value="F:metal ion binding"/>
    <property type="evidence" value="ECO:0007669"/>
    <property type="project" value="UniProtKB-KW"/>
</dbReference>
<dbReference type="GO" id="GO:0044210">
    <property type="term" value="P:'de novo' CTP biosynthetic process"/>
    <property type="evidence" value="ECO:0007669"/>
    <property type="project" value="UniProtKB-UniRule"/>
</dbReference>
<dbReference type="GO" id="GO:0019856">
    <property type="term" value="P:pyrimidine nucleobase biosynthetic process"/>
    <property type="evidence" value="ECO:0007669"/>
    <property type="project" value="TreeGrafter"/>
</dbReference>
<dbReference type="CDD" id="cd03113">
    <property type="entry name" value="CTPS_N"/>
    <property type="match status" value="1"/>
</dbReference>
<dbReference type="CDD" id="cd01746">
    <property type="entry name" value="GATase1_CTP_Synthase"/>
    <property type="match status" value="1"/>
</dbReference>
<dbReference type="FunFam" id="3.40.50.300:FF:000009">
    <property type="entry name" value="CTP synthase"/>
    <property type="match status" value="1"/>
</dbReference>
<dbReference type="FunFam" id="3.40.50.880:FF:000002">
    <property type="entry name" value="CTP synthase"/>
    <property type="match status" value="1"/>
</dbReference>
<dbReference type="Gene3D" id="3.40.50.880">
    <property type="match status" value="1"/>
</dbReference>
<dbReference type="Gene3D" id="3.40.50.300">
    <property type="entry name" value="P-loop containing nucleotide triphosphate hydrolases"/>
    <property type="match status" value="1"/>
</dbReference>
<dbReference type="HAMAP" id="MF_01227">
    <property type="entry name" value="PyrG"/>
    <property type="match status" value="1"/>
</dbReference>
<dbReference type="InterPro" id="IPR029062">
    <property type="entry name" value="Class_I_gatase-like"/>
</dbReference>
<dbReference type="InterPro" id="IPR004468">
    <property type="entry name" value="CTP_synthase"/>
</dbReference>
<dbReference type="InterPro" id="IPR017456">
    <property type="entry name" value="CTP_synthase_N"/>
</dbReference>
<dbReference type="InterPro" id="IPR017926">
    <property type="entry name" value="GATASE"/>
</dbReference>
<dbReference type="InterPro" id="IPR033828">
    <property type="entry name" value="GATase1_CTP_Synthase"/>
</dbReference>
<dbReference type="InterPro" id="IPR027417">
    <property type="entry name" value="P-loop_NTPase"/>
</dbReference>
<dbReference type="NCBIfam" id="NF003792">
    <property type="entry name" value="PRK05380.1"/>
    <property type="match status" value="1"/>
</dbReference>
<dbReference type="NCBIfam" id="TIGR00337">
    <property type="entry name" value="PyrG"/>
    <property type="match status" value="1"/>
</dbReference>
<dbReference type="PANTHER" id="PTHR11550">
    <property type="entry name" value="CTP SYNTHASE"/>
    <property type="match status" value="1"/>
</dbReference>
<dbReference type="PANTHER" id="PTHR11550:SF0">
    <property type="entry name" value="CTP SYNTHASE-RELATED"/>
    <property type="match status" value="1"/>
</dbReference>
<dbReference type="Pfam" id="PF06418">
    <property type="entry name" value="CTP_synth_N"/>
    <property type="match status" value="1"/>
</dbReference>
<dbReference type="Pfam" id="PF00117">
    <property type="entry name" value="GATase"/>
    <property type="match status" value="1"/>
</dbReference>
<dbReference type="SUPFAM" id="SSF52317">
    <property type="entry name" value="Class I glutamine amidotransferase-like"/>
    <property type="match status" value="1"/>
</dbReference>
<dbReference type="SUPFAM" id="SSF52540">
    <property type="entry name" value="P-loop containing nucleoside triphosphate hydrolases"/>
    <property type="match status" value="1"/>
</dbReference>
<dbReference type="PROSITE" id="PS51273">
    <property type="entry name" value="GATASE_TYPE_1"/>
    <property type="match status" value="1"/>
</dbReference>
<feature type="chain" id="PRO_0000266202" description="CTP synthase">
    <location>
        <begin position="1"/>
        <end position="542"/>
    </location>
</feature>
<feature type="domain" description="Glutamine amidotransferase type-1" evidence="1">
    <location>
        <begin position="291"/>
        <end position="541"/>
    </location>
</feature>
<feature type="region of interest" description="Amidoligase domain" evidence="1">
    <location>
        <begin position="1"/>
        <end position="265"/>
    </location>
</feature>
<feature type="active site" description="Nucleophile; for glutamine hydrolysis" evidence="1">
    <location>
        <position position="380"/>
    </location>
</feature>
<feature type="active site" evidence="1">
    <location>
        <position position="514"/>
    </location>
</feature>
<feature type="active site" evidence="1">
    <location>
        <position position="516"/>
    </location>
</feature>
<feature type="binding site" evidence="1">
    <location>
        <position position="13"/>
    </location>
    <ligand>
        <name>CTP</name>
        <dbReference type="ChEBI" id="CHEBI:37563"/>
        <note>allosteric inhibitor</note>
    </ligand>
</feature>
<feature type="binding site" evidence="1">
    <location>
        <position position="13"/>
    </location>
    <ligand>
        <name>UTP</name>
        <dbReference type="ChEBI" id="CHEBI:46398"/>
    </ligand>
</feature>
<feature type="binding site" evidence="1">
    <location>
        <begin position="14"/>
        <end position="19"/>
    </location>
    <ligand>
        <name>ATP</name>
        <dbReference type="ChEBI" id="CHEBI:30616"/>
    </ligand>
</feature>
<feature type="binding site" evidence="1">
    <location>
        <position position="71"/>
    </location>
    <ligand>
        <name>ATP</name>
        <dbReference type="ChEBI" id="CHEBI:30616"/>
    </ligand>
</feature>
<feature type="binding site" evidence="1">
    <location>
        <position position="71"/>
    </location>
    <ligand>
        <name>Mg(2+)</name>
        <dbReference type="ChEBI" id="CHEBI:18420"/>
    </ligand>
</feature>
<feature type="binding site" evidence="1">
    <location>
        <position position="139"/>
    </location>
    <ligand>
        <name>Mg(2+)</name>
        <dbReference type="ChEBI" id="CHEBI:18420"/>
    </ligand>
</feature>
<feature type="binding site" evidence="1">
    <location>
        <begin position="146"/>
        <end position="148"/>
    </location>
    <ligand>
        <name>CTP</name>
        <dbReference type="ChEBI" id="CHEBI:37563"/>
        <note>allosteric inhibitor</note>
    </ligand>
</feature>
<feature type="binding site" evidence="1">
    <location>
        <begin position="186"/>
        <end position="191"/>
    </location>
    <ligand>
        <name>CTP</name>
        <dbReference type="ChEBI" id="CHEBI:37563"/>
        <note>allosteric inhibitor</note>
    </ligand>
</feature>
<feature type="binding site" evidence="1">
    <location>
        <begin position="186"/>
        <end position="191"/>
    </location>
    <ligand>
        <name>UTP</name>
        <dbReference type="ChEBI" id="CHEBI:46398"/>
    </ligand>
</feature>
<feature type="binding site" evidence="1">
    <location>
        <position position="222"/>
    </location>
    <ligand>
        <name>CTP</name>
        <dbReference type="ChEBI" id="CHEBI:37563"/>
        <note>allosteric inhibitor</note>
    </ligand>
</feature>
<feature type="binding site" evidence="1">
    <location>
        <position position="222"/>
    </location>
    <ligand>
        <name>UTP</name>
        <dbReference type="ChEBI" id="CHEBI:46398"/>
    </ligand>
</feature>
<feature type="binding site" evidence="1">
    <location>
        <position position="353"/>
    </location>
    <ligand>
        <name>L-glutamine</name>
        <dbReference type="ChEBI" id="CHEBI:58359"/>
    </ligand>
</feature>
<feature type="binding site" evidence="1">
    <location>
        <begin position="381"/>
        <end position="384"/>
    </location>
    <ligand>
        <name>L-glutamine</name>
        <dbReference type="ChEBI" id="CHEBI:58359"/>
    </ligand>
</feature>
<feature type="binding site" evidence="1">
    <location>
        <position position="404"/>
    </location>
    <ligand>
        <name>L-glutamine</name>
        <dbReference type="ChEBI" id="CHEBI:58359"/>
    </ligand>
</feature>
<feature type="binding site" evidence="1">
    <location>
        <position position="469"/>
    </location>
    <ligand>
        <name>L-glutamine</name>
        <dbReference type="ChEBI" id="CHEBI:58359"/>
    </ligand>
</feature>
<gene>
    <name evidence="1" type="primary">pyrG</name>
    <name type="ordered locus">Rru_A1887</name>
</gene>
<organism>
    <name type="scientific">Rhodospirillum rubrum (strain ATCC 11170 / ATH 1.1.1 / DSM 467 / LMG 4362 / NCIMB 8255 / S1)</name>
    <dbReference type="NCBI Taxonomy" id="269796"/>
    <lineage>
        <taxon>Bacteria</taxon>
        <taxon>Pseudomonadati</taxon>
        <taxon>Pseudomonadota</taxon>
        <taxon>Alphaproteobacteria</taxon>
        <taxon>Rhodospirillales</taxon>
        <taxon>Rhodospirillaceae</taxon>
        <taxon>Rhodospirillum</taxon>
    </lineage>
</organism>
<protein>
    <recommendedName>
        <fullName evidence="1">CTP synthase</fullName>
        <ecNumber evidence="1">6.3.4.2</ecNumber>
    </recommendedName>
    <alternativeName>
        <fullName evidence="1">Cytidine 5'-triphosphate synthase</fullName>
    </alternativeName>
    <alternativeName>
        <fullName evidence="1">Cytidine triphosphate synthetase</fullName>
        <shortName evidence="1">CTP synthetase</shortName>
        <shortName evidence="1">CTPS</shortName>
    </alternativeName>
    <alternativeName>
        <fullName evidence="1">UTP--ammonia ligase</fullName>
    </alternativeName>
</protein>
<name>PYRG_RHORT</name>